<name>FMTA_STAAC</name>
<comment type="function">
    <text evidence="1 3 4">Catalyzes the liberation of D-alanyl moieties present on wall teichoic acid (WTA) and lipoteichoic acid (LTA) (By similarity). Affects the methicillin resistance level and autolysis in the presence of Triton X-100 as well as the cell wall structure (PubMed:10471551, PubMed:9371333).</text>
</comment>
<comment type="catalytic activity">
    <reaction evidence="1">
        <text>[(4-D-Ala)-(2-GlcNAc)-Rib-ol-P]n-[Gro-P]m-beta-D-ManNAc-(1-&gt;4)-alpha-D-GlcNAc-P-peptidoglycan + n H2O = [(2-GlcNAc)-Rib-ol-P]n-[Gro-P]m-beta-D-ManNAc-(1-&gt;4)-alpha-D-GlcNAc-P-peptidoglycan + n D-alanine.</text>
        <dbReference type="EC" id="3.1.1.103"/>
    </reaction>
</comment>
<comment type="subcellular location">
    <subcellularLocation>
        <location evidence="3">Cell membrane</location>
        <topology evidence="3">Peripheral membrane protein</topology>
    </subcellularLocation>
</comment>
<comment type="induction">
    <text>Transcription is dose dependently increased by the addition of beta-lactam antibiotics, fosfomycin, and bacitracin.</text>
</comment>
<comment type="miscellaneous">
    <text>Inactivation of fmtA results in reduction of the methicillin resistance and in a modification of the cell wall structure.</text>
</comment>
<dbReference type="EC" id="3.1.1.103" evidence="1"/>
<dbReference type="EMBL" id="CP000046">
    <property type="protein sequence ID" value="AAW36530.1"/>
    <property type="molecule type" value="Genomic_DNA"/>
</dbReference>
<dbReference type="RefSeq" id="WP_000671243.1">
    <property type="nucleotide sequence ID" value="NZ_JBGOFO010000002.1"/>
</dbReference>
<dbReference type="SMR" id="Q5HH27"/>
<dbReference type="MEROPS" id="S12.006"/>
<dbReference type="KEGG" id="sac:SACOL1066"/>
<dbReference type="HOGENOM" id="CLU_020027_0_0_9"/>
<dbReference type="Proteomes" id="UP000000530">
    <property type="component" value="Chromosome"/>
</dbReference>
<dbReference type="GO" id="GO:0005886">
    <property type="term" value="C:plasma membrane"/>
    <property type="evidence" value="ECO:0007669"/>
    <property type="project" value="UniProtKB-SubCell"/>
</dbReference>
<dbReference type="GO" id="GO:0016787">
    <property type="term" value="F:hydrolase activity"/>
    <property type="evidence" value="ECO:0007669"/>
    <property type="project" value="UniProtKB-KW"/>
</dbReference>
<dbReference type="GO" id="GO:0071555">
    <property type="term" value="P:cell wall organization"/>
    <property type="evidence" value="ECO:0007669"/>
    <property type="project" value="UniProtKB-KW"/>
</dbReference>
<dbReference type="GO" id="GO:0046677">
    <property type="term" value="P:response to antibiotic"/>
    <property type="evidence" value="ECO:0007669"/>
    <property type="project" value="UniProtKB-KW"/>
</dbReference>
<dbReference type="FunFam" id="3.40.710.10:FF:000040">
    <property type="entry name" value="Methicillin resistance protein FmtA"/>
    <property type="match status" value="1"/>
</dbReference>
<dbReference type="Gene3D" id="3.40.710.10">
    <property type="entry name" value="DD-peptidase/beta-lactamase superfamily"/>
    <property type="match status" value="1"/>
</dbReference>
<dbReference type="InterPro" id="IPR050491">
    <property type="entry name" value="Bact_CellWall_Synth/Modif"/>
</dbReference>
<dbReference type="InterPro" id="IPR001466">
    <property type="entry name" value="Beta-lactam-related"/>
</dbReference>
<dbReference type="InterPro" id="IPR012338">
    <property type="entry name" value="Beta-lactam/transpept-like"/>
</dbReference>
<dbReference type="PANTHER" id="PTHR46825">
    <property type="entry name" value="D-ALANYL-D-ALANINE-CARBOXYPEPTIDASE/ENDOPEPTIDASE AMPH"/>
    <property type="match status" value="1"/>
</dbReference>
<dbReference type="PANTHER" id="PTHR46825:SF11">
    <property type="entry name" value="PENICILLIN-BINDING PROTEIN 4"/>
    <property type="match status" value="1"/>
</dbReference>
<dbReference type="Pfam" id="PF00144">
    <property type="entry name" value="Beta-lactamase"/>
    <property type="match status" value="1"/>
</dbReference>
<dbReference type="SUPFAM" id="SSF56601">
    <property type="entry name" value="beta-lactamase/transpeptidase-like"/>
    <property type="match status" value="1"/>
</dbReference>
<protein>
    <recommendedName>
        <fullName>Teichoic acid D-alanine hydrolase</fullName>
        <ecNumber evidence="1">3.1.1.103</ecNumber>
    </recommendedName>
    <alternativeName>
        <fullName>Teichoic acid D-alanine esterase</fullName>
    </alternativeName>
</protein>
<feature type="signal peptide" evidence="2">
    <location>
        <begin position="1"/>
        <end position="23"/>
    </location>
</feature>
<feature type="chain" id="PRO_0000043099" description="Teichoic acid D-alanine hydrolase">
    <location>
        <begin position="24"/>
        <end position="397"/>
    </location>
</feature>
<accession>Q5HH27</accession>
<gene>
    <name type="primary">fmtA</name>
    <name type="synonym">fmt</name>
    <name type="ordered locus">SACOL1066</name>
</gene>
<sequence>MKFNKVKLVIHACVLLFIIISIALIFHRLQTKTHSIDPIHKETKLSDNEKYLVDRNKEKVAPSKLKEVYNSKDPKYKKIDKYLQSSLFNGSVAIYENGKLKMSKGYGYQDFEKGIKNTPNTMFLIGSAQKFSTGLLLKQLEEEHKININDPVSKYLPWFKTSKPIPLKDLMLHQSGLYKYKSSKDYKNLDQAVKAIQKRGIDPKKYKKHMYNDGNYLVLAKVIEEVTGKSYAENYYTKIGDPLKLQHTAFYDEQPFKKYLAKGYAYNSTGLSFLRPNILDQYYGAGNLYMTPTDMGKLITQIQQYKLFSPKITNPLLHEFGTKKYPDEYRYGFYAKPTLNRLNGGFFGQVFTVYYNDKYVVVLALNVKGNNEVRIKHIYNDILKQNKPYNTKGVIVQ</sequence>
<proteinExistence type="evidence at transcript level"/>
<evidence type="ECO:0000250" key="1">
    <source>
        <dbReference type="UniProtKB" id="Q7A2T0"/>
    </source>
</evidence>
<evidence type="ECO:0000255" key="2"/>
<evidence type="ECO:0000269" key="3">
    <source>
    </source>
</evidence>
<evidence type="ECO:0000269" key="4">
    <source>
    </source>
</evidence>
<reference key="1">
    <citation type="journal article" date="2005" name="J. Bacteriol.">
        <title>Insights on evolution of virulence and resistance from the complete genome analysis of an early methicillin-resistant Staphylococcus aureus strain and a biofilm-producing methicillin-resistant Staphylococcus epidermidis strain.</title>
        <authorList>
            <person name="Gill S.R."/>
            <person name="Fouts D.E."/>
            <person name="Archer G.L."/>
            <person name="Mongodin E.F."/>
            <person name="DeBoy R.T."/>
            <person name="Ravel J."/>
            <person name="Paulsen I.T."/>
            <person name="Kolonay J.F."/>
            <person name="Brinkac L.M."/>
            <person name="Beanan M.J."/>
            <person name="Dodson R.J."/>
            <person name="Daugherty S.C."/>
            <person name="Madupu R."/>
            <person name="Angiuoli S.V."/>
            <person name="Durkin A.S."/>
            <person name="Haft D.H."/>
            <person name="Vamathevan J.J."/>
            <person name="Khouri H."/>
            <person name="Utterback T.R."/>
            <person name="Lee C."/>
            <person name="Dimitrov G."/>
            <person name="Jiang L."/>
            <person name="Qin H."/>
            <person name="Weidman J."/>
            <person name="Tran K."/>
            <person name="Kang K.H."/>
            <person name="Hance I.R."/>
            <person name="Nelson K.E."/>
            <person name="Fraser C.M."/>
        </authorList>
    </citation>
    <scope>NUCLEOTIDE SEQUENCE [LARGE SCALE GENOMIC DNA]</scope>
    <source>
        <strain>COL</strain>
    </source>
</reference>
<reference key="2">
    <citation type="journal article" date="1997" name="Antimicrob. Agents Chemother.">
        <title>Cloning and characterization of the fmt gene which affects the methicillin resistance level and autolysis in the presence of triton X-100 in methicillin-resistant Staphylococcus aureus.</title>
        <authorList>
            <person name="Komatsuzawa H."/>
            <person name="Sugai M."/>
            <person name="Ohta K."/>
            <person name="Fujiwara T."/>
            <person name="Nakashima S."/>
            <person name="Suzuki J."/>
            <person name="Lee C.Y."/>
            <person name="Suginaka H."/>
        </authorList>
    </citation>
    <scope>FUNCTION</scope>
</reference>
<reference key="3">
    <citation type="journal article" date="1999" name="Antimicrob. Agents Chemother.">
        <title>Characterization of fmtA, a gene that modulates the expression of methicillin resistance in Staphylococcus aureus.</title>
        <authorList>
            <person name="Komatsuzawa H."/>
            <person name="Ohta K."/>
            <person name="Labischinski H."/>
            <person name="Sugai M."/>
            <person name="Suginaka H."/>
        </authorList>
    </citation>
    <scope>FUNCTION</scope>
    <scope>SUBCELLULAR LOCATION</scope>
</reference>
<organism>
    <name type="scientific">Staphylococcus aureus (strain COL)</name>
    <dbReference type="NCBI Taxonomy" id="93062"/>
    <lineage>
        <taxon>Bacteria</taxon>
        <taxon>Bacillati</taxon>
        <taxon>Bacillota</taxon>
        <taxon>Bacilli</taxon>
        <taxon>Bacillales</taxon>
        <taxon>Staphylococcaceae</taxon>
        <taxon>Staphylococcus</taxon>
    </lineage>
</organism>
<keyword id="KW-0046">Antibiotic resistance</keyword>
<keyword id="KW-1003">Cell membrane</keyword>
<keyword id="KW-0961">Cell wall biogenesis/degradation</keyword>
<keyword id="KW-0378">Hydrolase</keyword>
<keyword id="KW-0472">Membrane</keyword>
<keyword id="KW-0732">Signal</keyword>